<keyword id="KW-0325">Glycoprotein</keyword>
<keyword id="KW-0378">Hydrolase</keyword>
<keyword id="KW-0472">Membrane</keyword>
<keyword id="KW-0479">Metal-binding</keyword>
<keyword id="KW-0482">Metalloprotease</keyword>
<keyword id="KW-0645">Protease</keyword>
<keyword id="KW-1185">Reference proteome</keyword>
<keyword id="KW-0812">Transmembrane</keyword>
<keyword id="KW-1133">Transmembrane helix</keyword>
<keyword id="KW-0926">Vacuole</keyword>
<keyword id="KW-0862">Zinc</keyword>
<gene>
    <name type="ORF">ACLA_028640</name>
</gene>
<name>PFF1_ASPCL</name>
<evidence type="ECO:0000250" key="1">
    <source>
        <dbReference type="UniProtKB" id="P38244"/>
    </source>
</evidence>
<evidence type="ECO:0000250" key="2">
    <source>
        <dbReference type="UniProtKB" id="P80561"/>
    </source>
</evidence>
<evidence type="ECO:0000255" key="3"/>
<evidence type="ECO:0000255" key="4">
    <source>
        <dbReference type="PROSITE-ProRule" id="PRU00498"/>
    </source>
</evidence>
<evidence type="ECO:0000256" key="5">
    <source>
        <dbReference type="SAM" id="MobiDB-lite"/>
    </source>
</evidence>
<evidence type="ECO:0000305" key="6"/>
<accession>A1CR68</accession>
<dbReference type="EC" id="3.4.-.-" evidence="6"/>
<dbReference type="EMBL" id="DS027059">
    <property type="protein sequence ID" value="EAW08139.1"/>
    <property type="molecule type" value="Genomic_DNA"/>
</dbReference>
<dbReference type="RefSeq" id="XP_001269565.1">
    <property type="nucleotide sequence ID" value="XM_001269564.1"/>
</dbReference>
<dbReference type="SMR" id="A1CR68"/>
<dbReference type="STRING" id="344612.A1CR68"/>
<dbReference type="EnsemblFungi" id="EAW08139">
    <property type="protein sequence ID" value="EAW08139"/>
    <property type="gene ID" value="ACLA_028640"/>
</dbReference>
<dbReference type="GeneID" id="4701187"/>
<dbReference type="KEGG" id="act:ACLA_028640"/>
<dbReference type="VEuPathDB" id="FungiDB:ACLA_028640"/>
<dbReference type="eggNOG" id="KOG2194">
    <property type="taxonomic scope" value="Eukaryota"/>
</dbReference>
<dbReference type="HOGENOM" id="CLU_006412_1_0_1"/>
<dbReference type="OMA" id="TPWPVTI"/>
<dbReference type="OrthoDB" id="10257471at2759"/>
<dbReference type="Proteomes" id="UP000006701">
    <property type="component" value="Unassembled WGS sequence"/>
</dbReference>
<dbReference type="GO" id="GO:0005774">
    <property type="term" value="C:vacuolar membrane"/>
    <property type="evidence" value="ECO:0007669"/>
    <property type="project" value="UniProtKB-SubCell"/>
</dbReference>
<dbReference type="GO" id="GO:0046872">
    <property type="term" value="F:metal ion binding"/>
    <property type="evidence" value="ECO:0007669"/>
    <property type="project" value="UniProtKB-KW"/>
</dbReference>
<dbReference type="GO" id="GO:0008235">
    <property type="term" value="F:metalloexopeptidase activity"/>
    <property type="evidence" value="ECO:0007669"/>
    <property type="project" value="InterPro"/>
</dbReference>
<dbReference type="GO" id="GO:0006508">
    <property type="term" value="P:proteolysis"/>
    <property type="evidence" value="ECO:0007669"/>
    <property type="project" value="UniProtKB-KW"/>
</dbReference>
<dbReference type="CDD" id="cd03875">
    <property type="entry name" value="M28_Fxna_like"/>
    <property type="match status" value="1"/>
</dbReference>
<dbReference type="FunFam" id="3.40.630.10:FF:000057">
    <property type="entry name" value="Vacuolar membrane protease"/>
    <property type="match status" value="1"/>
</dbReference>
<dbReference type="Gene3D" id="3.40.630.10">
    <property type="entry name" value="Zn peptidases"/>
    <property type="match status" value="1"/>
</dbReference>
<dbReference type="InterPro" id="IPR048024">
    <property type="entry name" value="Fxna-like_M28_dom"/>
</dbReference>
<dbReference type="InterPro" id="IPR045175">
    <property type="entry name" value="M28_fam"/>
</dbReference>
<dbReference type="InterPro" id="IPR007484">
    <property type="entry name" value="Peptidase_M28"/>
</dbReference>
<dbReference type="InterPro" id="IPR053975">
    <property type="entry name" value="PFF1_C"/>
</dbReference>
<dbReference type="InterPro" id="IPR053976">
    <property type="entry name" value="PFF1_TM"/>
</dbReference>
<dbReference type="PANTHER" id="PTHR12147">
    <property type="entry name" value="METALLOPEPTIDASE M28 FAMILY MEMBER"/>
    <property type="match status" value="1"/>
</dbReference>
<dbReference type="PANTHER" id="PTHR12147:SF58">
    <property type="entry name" value="VACUOLAR MEMBRANE PROTEASE"/>
    <property type="match status" value="1"/>
</dbReference>
<dbReference type="Pfam" id="PF04389">
    <property type="entry name" value="Peptidase_M28"/>
    <property type="match status" value="1"/>
</dbReference>
<dbReference type="Pfam" id="PF22250">
    <property type="entry name" value="PFF1_C"/>
    <property type="match status" value="1"/>
</dbReference>
<dbReference type="Pfam" id="PF22251">
    <property type="entry name" value="PFF1_TM"/>
    <property type="match status" value="1"/>
</dbReference>
<dbReference type="SUPFAM" id="SSF53187">
    <property type="entry name" value="Zn-dependent exopeptidases"/>
    <property type="match status" value="1"/>
</dbReference>
<reference key="1">
    <citation type="journal article" date="2008" name="PLoS Genet.">
        <title>Genomic islands in the pathogenic filamentous fungus Aspergillus fumigatus.</title>
        <authorList>
            <person name="Fedorova N.D."/>
            <person name="Khaldi N."/>
            <person name="Joardar V.S."/>
            <person name="Maiti R."/>
            <person name="Amedeo P."/>
            <person name="Anderson M.J."/>
            <person name="Crabtree J."/>
            <person name="Silva J.C."/>
            <person name="Badger J.H."/>
            <person name="Albarraq A."/>
            <person name="Angiuoli S."/>
            <person name="Bussey H."/>
            <person name="Bowyer P."/>
            <person name="Cotty P.J."/>
            <person name="Dyer P.S."/>
            <person name="Egan A."/>
            <person name="Galens K."/>
            <person name="Fraser-Liggett C.M."/>
            <person name="Haas B.J."/>
            <person name="Inman J.M."/>
            <person name="Kent R."/>
            <person name="Lemieux S."/>
            <person name="Malavazi I."/>
            <person name="Orvis J."/>
            <person name="Roemer T."/>
            <person name="Ronning C.M."/>
            <person name="Sundaram J.P."/>
            <person name="Sutton G."/>
            <person name="Turner G."/>
            <person name="Venter J.C."/>
            <person name="White O.R."/>
            <person name="Whitty B.R."/>
            <person name="Youngman P."/>
            <person name="Wolfe K.H."/>
            <person name="Goldman G.H."/>
            <person name="Wortman J.R."/>
            <person name="Jiang B."/>
            <person name="Denning D.W."/>
            <person name="Nierman W.C."/>
        </authorList>
    </citation>
    <scope>NUCLEOTIDE SEQUENCE [LARGE SCALE GENOMIC DNA]</scope>
    <source>
        <strain>ATCC 1007 / CBS 513.65 / DSM 816 / NCTC 3887 / NRRL 1 / QM 1276 / 107</strain>
    </source>
</reference>
<protein>
    <recommendedName>
        <fullName evidence="1">Vacuolar membrane protease</fullName>
        <ecNumber evidence="6">3.4.-.-</ecNumber>
    </recommendedName>
    <alternativeName>
        <fullName evidence="1">FXNA-related family protease 1</fullName>
    </alternativeName>
</protein>
<proteinExistence type="inferred from homology"/>
<feature type="chain" id="PRO_0000411698" description="Vacuolar membrane protease">
    <location>
        <begin position="1"/>
        <end position="973"/>
    </location>
</feature>
<feature type="topological domain" description="Cytoplasmic" evidence="1">
    <location>
        <begin position="1"/>
        <end position="15"/>
    </location>
</feature>
<feature type="transmembrane region" description="Helical; Name=1" evidence="3">
    <location>
        <begin position="16"/>
        <end position="36"/>
    </location>
</feature>
<feature type="topological domain" description="Vacuolar" evidence="1">
    <location>
        <begin position="37"/>
        <end position="383"/>
    </location>
</feature>
<feature type="transmembrane region" description="Helical; Name=2" evidence="3">
    <location>
        <begin position="384"/>
        <end position="404"/>
    </location>
</feature>
<feature type="topological domain" description="Cytoplasmic" evidence="1">
    <location>
        <begin position="405"/>
        <end position="438"/>
    </location>
</feature>
<feature type="transmembrane region" description="Helical; Name=3" evidence="3">
    <location>
        <begin position="439"/>
        <end position="459"/>
    </location>
</feature>
<feature type="topological domain" description="Vacuolar" evidence="1">
    <location>
        <begin position="460"/>
        <end position="469"/>
    </location>
</feature>
<feature type="transmembrane region" description="Helical; Name=4" evidence="3">
    <location>
        <begin position="470"/>
        <end position="490"/>
    </location>
</feature>
<feature type="topological domain" description="Cytoplasmic" evidence="1">
    <location>
        <begin position="491"/>
        <end position="504"/>
    </location>
</feature>
<feature type="transmembrane region" description="Helical; Name=5" evidence="3">
    <location>
        <begin position="505"/>
        <end position="525"/>
    </location>
</feature>
<feature type="topological domain" description="Vacuolar" evidence="1">
    <location>
        <begin position="526"/>
        <end position="529"/>
    </location>
</feature>
<feature type="transmembrane region" description="Helical; Name=6" evidence="3">
    <location>
        <begin position="530"/>
        <end position="550"/>
    </location>
</feature>
<feature type="topological domain" description="Cytoplasmic" evidence="1">
    <location>
        <begin position="551"/>
        <end position="674"/>
    </location>
</feature>
<feature type="transmembrane region" description="Helical; Name=7" evidence="3">
    <location>
        <begin position="675"/>
        <end position="695"/>
    </location>
</feature>
<feature type="topological domain" description="Vacuolar" evidence="1">
    <location>
        <begin position="696"/>
        <end position="708"/>
    </location>
</feature>
<feature type="transmembrane region" description="Helical; Name=8" evidence="3">
    <location>
        <begin position="709"/>
        <end position="729"/>
    </location>
</feature>
<feature type="topological domain" description="Cytoplasmic" evidence="1">
    <location>
        <begin position="730"/>
        <end position="735"/>
    </location>
</feature>
<feature type="transmembrane region" description="Helical; Name=9" evidence="3">
    <location>
        <begin position="736"/>
        <end position="756"/>
    </location>
</feature>
<feature type="topological domain" description="Vacuolar" evidence="1">
    <location>
        <begin position="757"/>
        <end position="973"/>
    </location>
</feature>
<feature type="region of interest" description="Disordered" evidence="5">
    <location>
        <begin position="572"/>
        <end position="623"/>
    </location>
</feature>
<feature type="compositionally biased region" description="Polar residues" evidence="5">
    <location>
        <begin position="574"/>
        <end position="587"/>
    </location>
</feature>
<feature type="compositionally biased region" description="Acidic residues" evidence="5">
    <location>
        <begin position="593"/>
        <end position="607"/>
    </location>
</feature>
<feature type="active site" description="Proton acceptor" evidence="2">
    <location>
        <position position="213"/>
    </location>
</feature>
<feature type="binding site" evidence="2">
    <location>
        <position position="167"/>
    </location>
    <ligand>
        <name>Zn(2+)</name>
        <dbReference type="ChEBI" id="CHEBI:29105"/>
        <label>1</label>
        <note>catalytic</note>
    </ligand>
</feature>
<feature type="binding site" evidence="2">
    <location>
        <position position="179"/>
    </location>
    <ligand>
        <name>Zn(2+)</name>
        <dbReference type="ChEBI" id="CHEBI:29105"/>
        <label>1</label>
        <note>catalytic</note>
    </ligand>
</feature>
<feature type="binding site" evidence="2">
    <location>
        <position position="179"/>
    </location>
    <ligand>
        <name>Zn(2+)</name>
        <dbReference type="ChEBI" id="CHEBI:29105"/>
        <label>2</label>
        <note>catalytic</note>
    </ligand>
</feature>
<feature type="binding site" evidence="2">
    <location>
        <position position="214"/>
    </location>
    <ligand>
        <name>Zn(2+)</name>
        <dbReference type="ChEBI" id="CHEBI:29105"/>
        <label>2</label>
        <note>catalytic</note>
    </ligand>
</feature>
<feature type="binding site" evidence="2">
    <location>
        <position position="239"/>
    </location>
    <ligand>
        <name>Zn(2+)</name>
        <dbReference type="ChEBI" id="CHEBI:29105"/>
        <label>1</label>
        <note>catalytic</note>
    </ligand>
</feature>
<feature type="binding site" evidence="2">
    <location>
        <position position="312"/>
    </location>
    <ligand>
        <name>Zn(2+)</name>
        <dbReference type="ChEBI" id="CHEBI:29105"/>
        <label>2</label>
        <note>catalytic</note>
    </ligand>
</feature>
<feature type="site" description="Transition state stabilizer" evidence="2">
    <location>
        <position position="311"/>
    </location>
</feature>
<feature type="glycosylation site" description="N-linked (GlcNAc...) asparagine" evidence="4">
    <location>
        <position position="52"/>
    </location>
</feature>
<feature type="glycosylation site" description="N-linked (GlcNAc...) asparagine" evidence="4">
    <location>
        <position position="115"/>
    </location>
</feature>
<feature type="glycosylation site" description="N-linked (GlcNAc...) asparagine" evidence="4">
    <location>
        <position position="803"/>
    </location>
</feature>
<feature type="glycosylation site" description="N-linked (GlcNAc...) asparagine" evidence="4">
    <location>
        <position position="839"/>
    </location>
</feature>
<comment type="function">
    <text evidence="1">May be involved in vacuolar sorting and osmoregulation.</text>
</comment>
<comment type="cofactor">
    <cofactor evidence="2">
        <name>Zn(2+)</name>
        <dbReference type="ChEBI" id="CHEBI:29105"/>
    </cofactor>
    <text evidence="2">Binds 2 Zn(2+) ions per subunit.</text>
</comment>
<comment type="subcellular location">
    <subcellularLocation>
        <location evidence="1">Vacuole membrane</location>
        <topology evidence="3">Multi-pass membrane protein</topology>
    </subcellularLocation>
</comment>
<comment type="similarity">
    <text evidence="6">Belongs to the peptidase M28 family.</text>
</comment>
<sequence>MARQYSRTNPLGFTPWPVTIITALVYLALVIPLLVVQHVVPSAPGSDPAGLNLTEAWADLQVLTNGFHPYNSHRNDDVHKWLLQRVHEIIDSAPARSTDSAHPPAVFVFDDDQSNLTFSGRGNELGVYFESTNILVYIRGTEDDETQWWADPQGQPASKGGVLVNAHYDSVSTGYGATDDGMGVVSCLQLLRYFTTPGHAPRRGLVVLLNNGEEDFLNGARVYSQHPLSRLPHTFVNLEGAGAGGRASLFRSSDTEVTRPYARAPHPFGSVLSANGFEAGLISSQTDYVVLEGDLGLRGLDIAFIEPRARYHTDQDDARHTSVDSLWHMLSAAVATTEGLVDDASDQFDGAPREDGKVASGSGSKAVWFDLFGSTLAVFELHTLFALSVTLLIVAPLVLLATSIALVRADRMYLFRSTARVPGSDDFDEGVSLQGVRGFFRFPFLLVIPTGVAVGLAYLVTKINPYIIHSSEYAVWSMMISAWVFLAWFVSRVADFARPSAFHRVYVLTWMFVAEWVLLVIATVYENRYGLAGGYFVFFALSGTFLATWISYLELFALPRKSEYARQIAPPSRYASNHGSRLGTSSGEHGMDDAEDEEDDDGDDEDEARNVEEEPTESTSLLRGRGQRTTFANYVRVTGDYLHGAGDDEPRETHVYGREQAWSAGLPKWTWVLQFLLSAPIVLILVGPLALLLTAALRQTAQDGSSPLFVYIAIAVLTTLLVTPLLPFIHRYTHHIPLFLLLVFTGTLIYNLVAFPFSPSNRLKLFFLQEVDLDTGVNRAFLSGAHPFVYEVARSLPSAAGQNVSCDLSAARPKCSWYGIPPQVQATATPDTADWVSFNITRSADQPTRARFSVAGQNTRACRLVFDDPVRSFAVLDSAYDPRFPHLSPQGTQEIRLWSREWGHTWTVDVEWTVPAVDGESRGVSGRVVCLWSDGNAPGVIPALDEVRRYSPVWTAVSKLSDGLVEGSRRFEV</sequence>
<organism>
    <name type="scientific">Aspergillus clavatus (strain ATCC 1007 / CBS 513.65 / DSM 816 / NCTC 3887 / NRRL 1 / QM 1276 / 107)</name>
    <dbReference type="NCBI Taxonomy" id="344612"/>
    <lineage>
        <taxon>Eukaryota</taxon>
        <taxon>Fungi</taxon>
        <taxon>Dikarya</taxon>
        <taxon>Ascomycota</taxon>
        <taxon>Pezizomycotina</taxon>
        <taxon>Eurotiomycetes</taxon>
        <taxon>Eurotiomycetidae</taxon>
        <taxon>Eurotiales</taxon>
        <taxon>Aspergillaceae</taxon>
        <taxon>Aspergillus</taxon>
        <taxon>Aspergillus subgen. Fumigati</taxon>
    </lineage>
</organism>